<keyword id="KW-0066">ATP synthesis</keyword>
<keyword id="KW-0067">ATP-binding</keyword>
<keyword id="KW-1003">Cell membrane</keyword>
<keyword id="KW-0139">CF(1)</keyword>
<keyword id="KW-0375">Hydrogen ion transport</keyword>
<keyword id="KW-0406">Ion transport</keyword>
<keyword id="KW-0472">Membrane</keyword>
<keyword id="KW-0547">Nucleotide-binding</keyword>
<keyword id="KW-1278">Translocase</keyword>
<keyword id="KW-0813">Transport</keyword>
<name>ATPB_STRPS</name>
<proteinExistence type="inferred from homology"/>
<accession>B2IQX0</accession>
<comment type="function">
    <text evidence="1">Produces ATP from ADP in the presence of a proton gradient across the membrane. The catalytic sites are hosted primarily by the beta subunits.</text>
</comment>
<comment type="catalytic activity">
    <reaction evidence="1">
        <text>ATP + H2O + 4 H(+)(in) = ADP + phosphate + 5 H(+)(out)</text>
        <dbReference type="Rhea" id="RHEA:57720"/>
        <dbReference type="ChEBI" id="CHEBI:15377"/>
        <dbReference type="ChEBI" id="CHEBI:15378"/>
        <dbReference type="ChEBI" id="CHEBI:30616"/>
        <dbReference type="ChEBI" id="CHEBI:43474"/>
        <dbReference type="ChEBI" id="CHEBI:456216"/>
        <dbReference type="EC" id="7.1.2.2"/>
    </reaction>
</comment>
<comment type="subunit">
    <text evidence="1">F-type ATPases have 2 components, CF(1) - the catalytic core - and CF(0) - the membrane proton channel. CF(1) has five subunits: alpha(3), beta(3), gamma(1), delta(1), epsilon(1). CF(0) has three main subunits: a(1), b(2) and c(9-12). The alpha and beta chains form an alternating ring which encloses part of the gamma chain. CF(1) is attached to CF(0) by a central stalk formed by the gamma and epsilon chains, while a peripheral stalk is formed by the delta and b chains.</text>
</comment>
<comment type="subcellular location">
    <subcellularLocation>
        <location evidence="1">Cell membrane</location>
        <topology evidence="1">Peripheral membrane protein</topology>
    </subcellularLocation>
</comment>
<comment type="similarity">
    <text evidence="1">Belongs to the ATPase alpha/beta chains family.</text>
</comment>
<gene>
    <name evidence="1" type="primary">atpD</name>
    <name type="ordered locus">SPCG_1492</name>
</gene>
<dbReference type="EC" id="7.1.2.2" evidence="1"/>
<dbReference type="EMBL" id="CP001033">
    <property type="protein sequence ID" value="ACB90744.1"/>
    <property type="molecule type" value="Genomic_DNA"/>
</dbReference>
<dbReference type="RefSeq" id="WP_000094360.1">
    <property type="nucleotide sequence ID" value="NC_010582.1"/>
</dbReference>
<dbReference type="SMR" id="B2IQX0"/>
<dbReference type="GeneID" id="45653253"/>
<dbReference type="KEGG" id="spw:SPCG_1492"/>
<dbReference type="HOGENOM" id="CLU_022398_0_2_9"/>
<dbReference type="GO" id="GO:0005886">
    <property type="term" value="C:plasma membrane"/>
    <property type="evidence" value="ECO:0007669"/>
    <property type="project" value="UniProtKB-SubCell"/>
</dbReference>
<dbReference type="GO" id="GO:0045259">
    <property type="term" value="C:proton-transporting ATP synthase complex"/>
    <property type="evidence" value="ECO:0007669"/>
    <property type="project" value="UniProtKB-KW"/>
</dbReference>
<dbReference type="GO" id="GO:0005524">
    <property type="term" value="F:ATP binding"/>
    <property type="evidence" value="ECO:0007669"/>
    <property type="project" value="UniProtKB-UniRule"/>
</dbReference>
<dbReference type="GO" id="GO:0016887">
    <property type="term" value="F:ATP hydrolysis activity"/>
    <property type="evidence" value="ECO:0007669"/>
    <property type="project" value="InterPro"/>
</dbReference>
<dbReference type="GO" id="GO:0046933">
    <property type="term" value="F:proton-transporting ATP synthase activity, rotational mechanism"/>
    <property type="evidence" value="ECO:0007669"/>
    <property type="project" value="UniProtKB-UniRule"/>
</dbReference>
<dbReference type="CDD" id="cd18110">
    <property type="entry name" value="ATP-synt_F1_beta_C"/>
    <property type="match status" value="1"/>
</dbReference>
<dbReference type="CDD" id="cd18115">
    <property type="entry name" value="ATP-synt_F1_beta_N"/>
    <property type="match status" value="1"/>
</dbReference>
<dbReference type="CDD" id="cd01133">
    <property type="entry name" value="F1-ATPase_beta_CD"/>
    <property type="match status" value="1"/>
</dbReference>
<dbReference type="FunFam" id="1.10.1140.10:FF:000001">
    <property type="entry name" value="ATP synthase subunit beta"/>
    <property type="match status" value="1"/>
</dbReference>
<dbReference type="FunFam" id="2.40.10.170:FF:000005">
    <property type="entry name" value="ATP synthase subunit beta"/>
    <property type="match status" value="1"/>
</dbReference>
<dbReference type="FunFam" id="3.40.50.300:FF:000004">
    <property type="entry name" value="ATP synthase subunit beta"/>
    <property type="match status" value="1"/>
</dbReference>
<dbReference type="Gene3D" id="2.40.10.170">
    <property type="match status" value="1"/>
</dbReference>
<dbReference type="Gene3D" id="1.10.1140.10">
    <property type="entry name" value="Bovine Mitochondrial F1-atpase, Atp Synthase Beta Chain, Chain D, domain 3"/>
    <property type="match status" value="1"/>
</dbReference>
<dbReference type="Gene3D" id="3.40.50.300">
    <property type="entry name" value="P-loop containing nucleotide triphosphate hydrolases"/>
    <property type="match status" value="1"/>
</dbReference>
<dbReference type="HAMAP" id="MF_01347">
    <property type="entry name" value="ATP_synth_beta_bact"/>
    <property type="match status" value="1"/>
</dbReference>
<dbReference type="InterPro" id="IPR003593">
    <property type="entry name" value="AAA+_ATPase"/>
</dbReference>
<dbReference type="InterPro" id="IPR055190">
    <property type="entry name" value="ATP-synt_VA_C"/>
</dbReference>
<dbReference type="InterPro" id="IPR005722">
    <property type="entry name" value="ATP_synth_F1_bsu"/>
</dbReference>
<dbReference type="InterPro" id="IPR020003">
    <property type="entry name" value="ATPase_a/bsu_AS"/>
</dbReference>
<dbReference type="InterPro" id="IPR050053">
    <property type="entry name" value="ATPase_alpha/beta_chains"/>
</dbReference>
<dbReference type="InterPro" id="IPR004100">
    <property type="entry name" value="ATPase_F1/V1/A1_a/bsu_N"/>
</dbReference>
<dbReference type="InterPro" id="IPR036121">
    <property type="entry name" value="ATPase_F1/V1/A1_a/bsu_N_sf"/>
</dbReference>
<dbReference type="InterPro" id="IPR000194">
    <property type="entry name" value="ATPase_F1/V1/A1_a/bsu_nucl-bd"/>
</dbReference>
<dbReference type="InterPro" id="IPR024034">
    <property type="entry name" value="ATPase_F1/V1_b/a_C"/>
</dbReference>
<dbReference type="InterPro" id="IPR027417">
    <property type="entry name" value="P-loop_NTPase"/>
</dbReference>
<dbReference type="NCBIfam" id="TIGR01039">
    <property type="entry name" value="atpD"/>
    <property type="match status" value="1"/>
</dbReference>
<dbReference type="PANTHER" id="PTHR15184">
    <property type="entry name" value="ATP SYNTHASE"/>
    <property type="match status" value="1"/>
</dbReference>
<dbReference type="PANTHER" id="PTHR15184:SF71">
    <property type="entry name" value="ATP SYNTHASE SUBUNIT BETA, MITOCHONDRIAL"/>
    <property type="match status" value="1"/>
</dbReference>
<dbReference type="Pfam" id="PF00006">
    <property type="entry name" value="ATP-synt_ab"/>
    <property type="match status" value="1"/>
</dbReference>
<dbReference type="Pfam" id="PF02874">
    <property type="entry name" value="ATP-synt_ab_N"/>
    <property type="match status" value="1"/>
</dbReference>
<dbReference type="Pfam" id="PF22919">
    <property type="entry name" value="ATP-synt_VA_C"/>
    <property type="match status" value="1"/>
</dbReference>
<dbReference type="SMART" id="SM00382">
    <property type="entry name" value="AAA"/>
    <property type="match status" value="1"/>
</dbReference>
<dbReference type="SUPFAM" id="SSF47917">
    <property type="entry name" value="C-terminal domain of alpha and beta subunits of F1 ATP synthase"/>
    <property type="match status" value="1"/>
</dbReference>
<dbReference type="SUPFAM" id="SSF50615">
    <property type="entry name" value="N-terminal domain of alpha and beta subunits of F1 ATP synthase"/>
    <property type="match status" value="1"/>
</dbReference>
<dbReference type="SUPFAM" id="SSF52540">
    <property type="entry name" value="P-loop containing nucleoside triphosphate hydrolases"/>
    <property type="match status" value="1"/>
</dbReference>
<dbReference type="PROSITE" id="PS00152">
    <property type="entry name" value="ATPASE_ALPHA_BETA"/>
    <property type="match status" value="1"/>
</dbReference>
<organism>
    <name type="scientific">Streptococcus pneumoniae (strain CGSP14)</name>
    <dbReference type="NCBI Taxonomy" id="516950"/>
    <lineage>
        <taxon>Bacteria</taxon>
        <taxon>Bacillati</taxon>
        <taxon>Bacillota</taxon>
        <taxon>Bacilli</taxon>
        <taxon>Lactobacillales</taxon>
        <taxon>Streptococcaceae</taxon>
        <taxon>Streptococcus</taxon>
    </lineage>
</organism>
<feature type="chain" id="PRO_1000143554" description="ATP synthase subunit beta">
    <location>
        <begin position="1"/>
        <end position="468"/>
    </location>
</feature>
<feature type="binding site" evidence="1">
    <location>
        <begin position="155"/>
        <end position="162"/>
    </location>
    <ligand>
        <name>ATP</name>
        <dbReference type="ChEBI" id="CHEBI:30616"/>
    </ligand>
</feature>
<protein>
    <recommendedName>
        <fullName evidence="1">ATP synthase subunit beta</fullName>
        <ecNumber evidence="1">7.1.2.2</ecNumber>
    </recommendedName>
    <alternativeName>
        <fullName evidence="1">ATP synthase F1 sector subunit beta</fullName>
    </alternativeName>
    <alternativeName>
        <fullName evidence="1">F-ATPase subunit beta</fullName>
    </alternativeName>
</protein>
<reference key="1">
    <citation type="journal article" date="2009" name="BMC Genomics">
        <title>Genome evolution driven by host adaptations results in a more virulent and antimicrobial-resistant Streptococcus pneumoniae serotype 14.</title>
        <authorList>
            <person name="Ding F."/>
            <person name="Tang P."/>
            <person name="Hsu M.-H."/>
            <person name="Cui P."/>
            <person name="Hu S."/>
            <person name="Yu J."/>
            <person name="Chiu C.-H."/>
        </authorList>
    </citation>
    <scope>NUCLEOTIDE SEQUENCE [LARGE SCALE GENOMIC DNA]</scope>
    <source>
        <strain>CGSP14</strain>
    </source>
</reference>
<evidence type="ECO:0000255" key="1">
    <source>
        <dbReference type="HAMAP-Rule" id="MF_01347"/>
    </source>
</evidence>
<sequence length="468" mass="50934">MSSGKIAQVIGPVVDVLFAAGEKLPEINNALVVYKNDERKTKIVLEVALELGDGMVRTIAMESTDGLTRGMEVLDTGRPISVPVGKETLGRVFNVLGDTIDLEAPFTEDAERQPIHKKAPTFDELSTSSEILETGIKVIDLLAPYLKGGKVGLFGGAGVGKTVLIQELIHNIAQEHGGISVFTGVGERTREGNDLYWEMKESGVIEKTAMVFGQMNEPPGARMRVALTGLTIAEYFRDVEGQDVLLFIDNIFRFTQAGSEVSALLGRMPSAVGYQPTLATEMGQLQERITSTKKGSVTSIQAIYVPADDYTDPAPATAFAHLDSTTNLERKLVQLGIYPAVDPLASSSRALAPEIVGEEHYAVAAEVKRVLQRYHELQDIIAILGMDELSDEEKTLVARARRIQFFLSQNFNVAEQFTGQPGSYVPVAETVRGFKEILDGKYDHLPEDAFRGVGSIEDVIAKAEKMGF</sequence>